<reference key="1">
    <citation type="journal article" date="2000" name="J. Bacteriol.">
        <title>A set of genes encoding a second toluene efflux system in Pseudomonas putida DOT-T1 is linked to the tod genes for toluene metabolism.</title>
        <authorList>
            <person name="Mosqueda G."/>
            <person name="Ramos J.L."/>
        </authorList>
    </citation>
    <scope>NUCLEOTIDE SEQUENCE [GENOMIC DNA]</scope>
    <scope>INDUCTION</scope>
    <source>
        <strain>DOT-T1E</strain>
    </source>
</reference>
<reference key="2">
    <citation type="journal article" date="2001" name="Mol. Microbiol.">
        <title>Global and cognate regulators control the expression of the organic solvent efflux pumps TtgABC and TtgDEF of Pseudomonas putida.</title>
        <authorList>
            <person name="Duque E."/>
            <person name="Segura A."/>
            <person name="Mosqueda G."/>
            <person name="Ramos J.L."/>
        </authorList>
    </citation>
    <scope>NUCLEOTIDE SEQUENCE [GENOMIC DNA]</scope>
    <scope>INDUCTION</scope>
    <source>
        <strain>DOT-T1E</strain>
    </source>
</reference>
<reference key="3">
    <citation type="submission" date="2010-09" db="EMBL/GenBank/DDBJ databases">
        <title>Global regulation of food supply by Pseudomonas putida DOT-T1E.</title>
        <authorList>
            <person name="Daniels C."/>
            <person name="Godoy P."/>
            <person name="Duque E."/>
            <person name="Molina-Henares M.A."/>
            <person name="de la Torre J."/>
            <person name="Del Arco J.M."/>
            <person name="Herrera C."/>
            <person name="Segura A."/>
            <person name="Guazzaroni M.E."/>
            <person name="Ferrer M."/>
            <person name="Ramos J.L."/>
        </authorList>
    </citation>
    <scope>NUCLEOTIDE SEQUENCE [GENOMIC DNA]</scope>
    <scope>SEQUENCE REVISION</scope>
    <source>
        <strain>DOT-T1E</strain>
    </source>
</reference>
<reference key="4">
    <citation type="journal article" date="2013" name="Microb. Biotechnol.">
        <title>Metabolic potential of the organic-solvent tolerant Pseudomonas putida DOT-T1E deduced from its annotated genome.</title>
        <authorList>
            <person name="Udaondo Z."/>
            <person name="Molina L."/>
            <person name="Daniels C."/>
            <person name="Gomez M.J."/>
            <person name="Molina-Henares M.A."/>
            <person name="Matilla M.A."/>
            <person name="Roca A."/>
            <person name="Fernandez M."/>
            <person name="Duque E."/>
            <person name="Segura A."/>
            <person name="Ramos J.L."/>
        </authorList>
    </citation>
    <scope>NUCLEOTIDE SEQUENCE [LARGE SCALE GENOMIC DNA]</scope>
    <source>
        <strain>DOT-T1E</strain>
    </source>
</reference>
<reference key="5">
    <citation type="journal article" date="2001" name="J. Bacteriol.">
        <title>Three efflux pumps are required to provide efficient tolerance to toluene in Pseudomonas putida DOT-T1E.</title>
        <authorList>
            <person name="Rojas A."/>
            <person name="Duque E."/>
            <person name="Mosqueda G."/>
            <person name="Golden G."/>
            <person name="Hurtado A."/>
            <person name="Ramos J.L."/>
            <person name="Segura A."/>
        </authorList>
    </citation>
    <scope>FUNCTION</scope>
    <scope>EFFLUX PUMP SUBSTRATES</scope>
    <source>
        <strain>DOT-T1E</strain>
    </source>
</reference>
<feature type="signal peptide" evidence="2">
    <location>
        <begin position="1"/>
        <end position="23"/>
    </location>
</feature>
<feature type="chain" id="PRO_0000018719" description="Toluene efflux pump periplasmic linker protein TtgD">
    <location>
        <begin position="24"/>
        <end position="382"/>
    </location>
</feature>
<feature type="coiled-coil region" evidence="1">
    <location>
        <begin position="100"/>
        <end position="136"/>
    </location>
</feature>
<feature type="lipid moiety-binding region" description="N-palmitoyl cysteine" evidence="2">
    <location>
        <position position="24"/>
    </location>
</feature>
<feature type="lipid moiety-binding region" description="S-diacylglycerol cysteine" evidence="2">
    <location>
        <position position="24"/>
    </location>
</feature>
<sequence>MRLERALRARQLIPLAAIWLLVGCGKQETVESTAVPPEVGVYTVKAQALTLTTDLPGRTSAYRVSEVRPQASGILQKRMFVEGAEVKQGEQLYQIDPRTYEALLARAEASLLTAQNLARRYERLLDTNAISQQQYDDAMATWKQAQAEAQMARINMQYTKVLAPITGRIGRSAVTEGALVTNGQAQELATVTQLDPIYVDVNQPITRLLGLKRALESGRLQRVGDNQAQVSLTLDDGTPYPLKGVLKFSEVSVAPSTGSVTLRAEFPNPDHKLLPGMFVHALLNEGEQQAAILVPHQAVGRDARGVPTVWVVKPDNTVESREVQTLQTVGNAWLLGAGINDGERVITEGVQLARSGITVKPVAAKNVKLMSEFGSQVQAQAH</sequence>
<comment type="function">
    <text evidence="5">The periplasmic linker protein component of an inducible organic solvent efflux pump. Involved in export of toluene and styrene but not of m-xylene, propylbenzene or ethylbenzene. Is not involved in antibiotic or AMP efflux.</text>
</comment>
<comment type="subcellular location">
    <subcellularLocation>
        <location evidence="6">Cell inner membrane</location>
        <topology evidence="2">Lipid-anchor</topology>
    </subcellularLocation>
</comment>
<comment type="induction">
    <text evidence="3 4">The ttgDEF operon is induced in the presence of toluene and styrene, but not m-xylene.</text>
</comment>
<comment type="similarity">
    <text evidence="6">Belongs to the membrane fusion protein (MFP) (TC 8.A.1) family.</text>
</comment>
<comment type="sequence caution" evidence="6">
    <conflict type="erroneous initiation">
        <sequence resource="EMBL-CDS" id="ADI95410"/>
    </conflict>
    <text>Extended N-terminus.</text>
</comment>
<comment type="sequence caution" evidence="6">
    <conflict type="erroneous initiation">
        <sequence resource="EMBL-CDS" id="AFO50110"/>
    </conflict>
    <text>Truncated N-terminus.</text>
</comment>
<proteinExistence type="evidence at transcript level"/>
<gene>
    <name type="primary">ttgD</name>
    <name type="synonym">sepA</name>
    <name type="ordered locus">T1E_4281</name>
</gene>
<protein>
    <recommendedName>
        <fullName>Toluene efflux pump periplasmic linker protein TtgD</fullName>
    </recommendedName>
</protein>
<keyword id="KW-0997">Cell inner membrane</keyword>
<keyword id="KW-1003">Cell membrane</keyword>
<keyword id="KW-0175">Coiled coil</keyword>
<keyword id="KW-0449">Lipoprotein</keyword>
<keyword id="KW-0472">Membrane</keyword>
<keyword id="KW-0564">Palmitate</keyword>
<keyword id="KW-0732">Signal</keyword>
<keyword id="KW-0813">Transport</keyword>
<evidence type="ECO:0000255" key="1"/>
<evidence type="ECO:0000255" key="2">
    <source>
        <dbReference type="PROSITE-ProRule" id="PRU00303"/>
    </source>
</evidence>
<evidence type="ECO:0000269" key="3">
    <source>
    </source>
</evidence>
<evidence type="ECO:0000269" key="4">
    <source>
    </source>
</evidence>
<evidence type="ECO:0000269" key="5">
    <source>
    </source>
</evidence>
<evidence type="ECO:0000305" key="6"/>
<accession>Q9KWV5</accession>
<accession>E0X9D1</accession>
<accession>I7B4U8</accession>
<name>TTGD_PSEPT</name>
<organism>
    <name type="scientific">Pseudomonas putida (strain DOT-T1E)</name>
    <dbReference type="NCBI Taxonomy" id="1196325"/>
    <lineage>
        <taxon>Bacteria</taxon>
        <taxon>Pseudomonadati</taxon>
        <taxon>Pseudomonadota</taxon>
        <taxon>Gammaproteobacteria</taxon>
        <taxon>Pseudomonadales</taxon>
        <taxon>Pseudomonadaceae</taxon>
        <taxon>Pseudomonas</taxon>
    </lineage>
</organism>
<dbReference type="EMBL" id="GQ884177">
    <property type="protein sequence ID" value="ADI95410.1"/>
    <property type="status" value="ALT_INIT"/>
    <property type="molecule type" value="Genomic_DNA"/>
</dbReference>
<dbReference type="EMBL" id="CP003734">
    <property type="protein sequence ID" value="AFO50110.1"/>
    <property type="status" value="ALT_INIT"/>
    <property type="molecule type" value="Genomic_DNA"/>
</dbReference>
<dbReference type="RefSeq" id="WP_024086925.1">
    <property type="nucleotide sequence ID" value="NC_018220.1"/>
</dbReference>
<dbReference type="SMR" id="Q9KWV5"/>
<dbReference type="TCDB" id="2.A.6.2.10">
    <property type="family name" value="the resistance-nodulation-cell division (rnd) superfamily"/>
</dbReference>
<dbReference type="GeneID" id="97167978"/>
<dbReference type="KEGG" id="ppx:T1E_4281"/>
<dbReference type="PATRIC" id="fig|1196325.3.peg.4238"/>
<dbReference type="HOGENOM" id="CLU_018816_2_1_6"/>
<dbReference type="Proteomes" id="UP000006503">
    <property type="component" value="Chromosome"/>
</dbReference>
<dbReference type="GO" id="GO:0005886">
    <property type="term" value="C:plasma membrane"/>
    <property type="evidence" value="ECO:0007669"/>
    <property type="project" value="UniProtKB-SubCell"/>
</dbReference>
<dbReference type="GO" id="GO:0022857">
    <property type="term" value="F:transmembrane transporter activity"/>
    <property type="evidence" value="ECO:0007669"/>
    <property type="project" value="InterPro"/>
</dbReference>
<dbReference type="GO" id="GO:0046677">
    <property type="term" value="P:response to antibiotic"/>
    <property type="evidence" value="ECO:0007669"/>
    <property type="project" value="TreeGrafter"/>
</dbReference>
<dbReference type="FunFam" id="2.40.420.20:FF:000001">
    <property type="entry name" value="Efflux RND transporter periplasmic adaptor subunit"/>
    <property type="match status" value="1"/>
</dbReference>
<dbReference type="Gene3D" id="2.40.30.170">
    <property type="match status" value="1"/>
</dbReference>
<dbReference type="Gene3D" id="2.40.420.20">
    <property type="match status" value="1"/>
</dbReference>
<dbReference type="Gene3D" id="2.40.50.100">
    <property type="match status" value="1"/>
</dbReference>
<dbReference type="Gene3D" id="1.10.287.470">
    <property type="entry name" value="Helix hairpin bin"/>
    <property type="match status" value="1"/>
</dbReference>
<dbReference type="InterPro" id="IPR043602">
    <property type="entry name" value="CusB-like_dom_1"/>
</dbReference>
<dbReference type="InterPro" id="IPR032317">
    <property type="entry name" value="CusB_D23"/>
</dbReference>
<dbReference type="InterPro" id="IPR051160">
    <property type="entry name" value="MFP_Efflux"/>
</dbReference>
<dbReference type="InterPro" id="IPR006143">
    <property type="entry name" value="RND_pump_MFP"/>
</dbReference>
<dbReference type="NCBIfam" id="TIGR01730">
    <property type="entry name" value="RND_mfp"/>
    <property type="match status" value="1"/>
</dbReference>
<dbReference type="PANTHER" id="PTHR30158">
    <property type="entry name" value="ACRA/E-RELATED COMPONENT OF DRUG EFFLUX TRANSPORTER"/>
    <property type="match status" value="1"/>
</dbReference>
<dbReference type="PANTHER" id="PTHR30158:SF3">
    <property type="entry name" value="MULTIDRUG EFFLUX PUMP SUBUNIT ACRA-RELATED"/>
    <property type="match status" value="1"/>
</dbReference>
<dbReference type="Pfam" id="PF00529">
    <property type="entry name" value="CusB_dom_1"/>
    <property type="match status" value="1"/>
</dbReference>
<dbReference type="Pfam" id="PF16576">
    <property type="entry name" value="HlyD_D23"/>
    <property type="match status" value="1"/>
</dbReference>
<dbReference type="SUPFAM" id="SSF111369">
    <property type="entry name" value="HlyD-like secretion proteins"/>
    <property type="match status" value="1"/>
</dbReference>
<dbReference type="PROSITE" id="PS51257">
    <property type="entry name" value="PROKAR_LIPOPROTEIN"/>
    <property type="match status" value="1"/>
</dbReference>